<keyword id="KW-0106">Calcium</keyword>
<keyword id="KW-0903">Direct protein sequencing</keyword>
<keyword id="KW-1015">Disulfide bond</keyword>
<keyword id="KW-1199">Hemostasis impairing toxin</keyword>
<keyword id="KW-0378">Hydrolase</keyword>
<keyword id="KW-0442">Lipid degradation</keyword>
<keyword id="KW-0443">Lipid metabolism</keyword>
<keyword id="KW-0479">Metal-binding</keyword>
<keyword id="KW-1201">Platelet aggregation inhibiting toxin</keyword>
<keyword id="KW-0964">Secreted</keyword>
<keyword id="KW-0732">Signal</keyword>
<keyword id="KW-0800">Toxin</keyword>
<reference key="1">
    <citation type="journal article" date="2004" name="Biochem. J.">
        <title>Venom phospholipases A2 of bamboo viper (Trimeresurus stejnegeri): molecular characterization, geographic variations and evidence of multiple ancestries.</title>
        <authorList>
            <person name="Tsai I.-H."/>
            <person name="Wang Y.-M."/>
            <person name="Chen Y.-H."/>
            <person name="Tsai T.-S."/>
            <person name="Tu M.-C."/>
        </authorList>
    </citation>
    <scope>NUCLEOTIDE SEQUENCE [MRNA]</scope>
    <scope>PROTEIN SEQUENCE OF 17-39</scope>
    <scope>FUNCTION</scope>
    <scope>DEVELOPMENTAL STAGE</scope>
    <scope>MASS SPECTROMETRY</scope>
    <source>
        <strain>Taiwan</strain>
        <tissue>Venom</tissue>
        <tissue>Venom gland</tissue>
    </source>
</reference>
<comment type="function">
    <text evidence="5">Snake venom phospholipase A2 (PLA2) that shows a moderate inhibition of ADP-induced human platelet aggregation when tested on platelet rich plasma. Exhibits high hydrolytic activities and prefers the anionic micelles (dPPC with deoxycholate) to the zwitterionic micelles (dPPC with Triton X-100). PLA2 catalyzes the calcium-dependent hydrolysis of the 2-acyl groups in 3-sn-phosphoglycerides.</text>
</comment>
<comment type="catalytic activity">
    <reaction evidence="3 4">
        <text>a 1,2-diacyl-sn-glycero-3-phosphocholine + H2O = a 1-acyl-sn-glycero-3-phosphocholine + a fatty acid + H(+)</text>
        <dbReference type="Rhea" id="RHEA:15801"/>
        <dbReference type="ChEBI" id="CHEBI:15377"/>
        <dbReference type="ChEBI" id="CHEBI:15378"/>
        <dbReference type="ChEBI" id="CHEBI:28868"/>
        <dbReference type="ChEBI" id="CHEBI:57643"/>
        <dbReference type="ChEBI" id="CHEBI:58168"/>
        <dbReference type="EC" id="3.1.1.4"/>
    </reaction>
</comment>
<comment type="cofactor">
    <cofactor evidence="1">
        <name>Ca(2+)</name>
        <dbReference type="ChEBI" id="CHEBI:29108"/>
    </cofactor>
    <text evidence="1">Binds 1 Ca(2+) ion.</text>
</comment>
<comment type="subcellular location">
    <subcellularLocation>
        <location>Secreted</location>
    </subcellularLocation>
</comment>
<comment type="tissue specificity">
    <text>Expressed by the venom gland.</text>
</comment>
<comment type="developmental stage">
    <text evidence="5">Is expressed more abundantly in adult than in juvenile vipers.</text>
</comment>
<comment type="mass spectrometry"/>
<comment type="similarity">
    <text evidence="6">Belongs to the phospholipase A2 family. Group II subfamily. D49 sub-subfamily.</text>
</comment>
<sequence>MRTLWIMAVLLLGVEGSLIQFETLIMKVAKKSGMFSYSAYGCYCGWGGQGQPQDATDRCCFVHDCCYGKVTGCDPKMDIYTYSEENGDIVCGGDDPCRKAVCECDKAAAICFRDNKDTYDWKKYWRFPTKNCQESVPC</sequence>
<evidence type="ECO:0000250" key="1"/>
<evidence type="ECO:0000250" key="2">
    <source>
        <dbReference type="UniProtKB" id="P14418"/>
    </source>
</evidence>
<evidence type="ECO:0000255" key="3">
    <source>
        <dbReference type="PROSITE-ProRule" id="PRU10035"/>
    </source>
</evidence>
<evidence type="ECO:0000255" key="4">
    <source>
        <dbReference type="PROSITE-ProRule" id="PRU10036"/>
    </source>
</evidence>
<evidence type="ECO:0000269" key="5">
    <source>
    </source>
</evidence>
<evidence type="ECO:0000305" key="6"/>
<feature type="signal peptide" evidence="1">
    <location>
        <begin position="1"/>
        <end position="16"/>
    </location>
</feature>
<feature type="chain" id="PRO_0000419067" description="Acidic phospholipase A2 Ts-A3">
    <location>
        <begin position="17"/>
        <end position="138"/>
    </location>
</feature>
<feature type="active site" evidence="2">
    <location>
        <position position="63"/>
    </location>
</feature>
<feature type="active site" evidence="2">
    <location>
        <position position="105"/>
    </location>
</feature>
<feature type="binding site" evidence="2">
    <location>
        <position position="43"/>
    </location>
    <ligand>
        <name>Ca(2+)</name>
        <dbReference type="ChEBI" id="CHEBI:29108"/>
    </ligand>
</feature>
<feature type="binding site" evidence="2">
    <location>
        <position position="45"/>
    </location>
    <ligand>
        <name>Ca(2+)</name>
        <dbReference type="ChEBI" id="CHEBI:29108"/>
    </ligand>
</feature>
<feature type="binding site" evidence="2">
    <location>
        <position position="47"/>
    </location>
    <ligand>
        <name>Ca(2+)</name>
        <dbReference type="ChEBI" id="CHEBI:29108"/>
    </ligand>
</feature>
<feature type="binding site" evidence="2">
    <location>
        <position position="64"/>
    </location>
    <ligand>
        <name>Ca(2+)</name>
        <dbReference type="ChEBI" id="CHEBI:29108"/>
    </ligand>
</feature>
<feature type="disulfide bond" evidence="2">
    <location>
        <begin position="42"/>
        <end position="132"/>
    </location>
</feature>
<feature type="disulfide bond" evidence="2">
    <location>
        <begin position="44"/>
        <end position="60"/>
    </location>
</feature>
<feature type="disulfide bond" evidence="2">
    <location>
        <begin position="59"/>
        <end position="111"/>
    </location>
</feature>
<feature type="disulfide bond" evidence="2">
    <location>
        <begin position="65"/>
        <end position="138"/>
    </location>
</feature>
<feature type="disulfide bond" evidence="2">
    <location>
        <begin position="66"/>
        <end position="104"/>
    </location>
</feature>
<feature type="disulfide bond" evidence="2">
    <location>
        <begin position="73"/>
        <end position="97"/>
    </location>
</feature>
<feature type="disulfide bond" evidence="2">
    <location>
        <begin position="91"/>
        <end position="102"/>
    </location>
</feature>
<organism>
    <name type="scientific">Trimeresurus stejnegeri</name>
    <name type="common">Chinese green tree viper</name>
    <name type="synonym">Viridovipera stejnegeri</name>
    <dbReference type="NCBI Taxonomy" id="39682"/>
    <lineage>
        <taxon>Eukaryota</taxon>
        <taxon>Metazoa</taxon>
        <taxon>Chordata</taxon>
        <taxon>Craniata</taxon>
        <taxon>Vertebrata</taxon>
        <taxon>Euteleostomi</taxon>
        <taxon>Lepidosauria</taxon>
        <taxon>Squamata</taxon>
        <taxon>Bifurcata</taxon>
        <taxon>Unidentata</taxon>
        <taxon>Episquamata</taxon>
        <taxon>Toxicofera</taxon>
        <taxon>Serpentes</taxon>
        <taxon>Colubroidea</taxon>
        <taxon>Viperidae</taxon>
        <taxon>Crotalinae</taxon>
        <taxon>Trimeresurus</taxon>
    </lineage>
</organism>
<dbReference type="EC" id="3.1.1.4"/>
<dbReference type="EMBL" id="AY211940">
    <property type="protein sequence ID" value="AAP48898.1"/>
    <property type="molecule type" value="mRNA"/>
</dbReference>
<dbReference type="SMR" id="Q6H3C9"/>
<dbReference type="GO" id="GO:0005576">
    <property type="term" value="C:extracellular region"/>
    <property type="evidence" value="ECO:0007669"/>
    <property type="project" value="UniProtKB-SubCell"/>
</dbReference>
<dbReference type="GO" id="GO:0005509">
    <property type="term" value="F:calcium ion binding"/>
    <property type="evidence" value="ECO:0007669"/>
    <property type="project" value="InterPro"/>
</dbReference>
<dbReference type="GO" id="GO:0047498">
    <property type="term" value="F:calcium-dependent phospholipase A2 activity"/>
    <property type="evidence" value="ECO:0007669"/>
    <property type="project" value="TreeGrafter"/>
</dbReference>
<dbReference type="GO" id="GO:0005543">
    <property type="term" value="F:phospholipid binding"/>
    <property type="evidence" value="ECO:0007669"/>
    <property type="project" value="TreeGrafter"/>
</dbReference>
<dbReference type="GO" id="GO:0090729">
    <property type="term" value="F:toxin activity"/>
    <property type="evidence" value="ECO:0007669"/>
    <property type="project" value="UniProtKB-KW"/>
</dbReference>
<dbReference type="GO" id="GO:0050482">
    <property type="term" value="P:arachidonate secretion"/>
    <property type="evidence" value="ECO:0007669"/>
    <property type="project" value="InterPro"/>
</dbReference>
<dbReference type="GO" id="GO:0016042">
    <property type="term" value="P:lipid catabolic process"/>
    <property type="evidence" value="ECO:0007669"/>
    <property type="project" value="UniProtKB-KW"/>
</dbReference>
<dbReference type="GO" id="GO:0042130">
    <property type="term" value="P:negative regulation of T cell proliferation"/>
    <property type="evidence" value="ECO:0007669"/>
    <property type="project" value="TreeGrafter"/>
</dbReference>
<dbReference type="GO" id="GO:0006644">
    <property type="term" value="P:phospholipid metabolic process"/>
    <property type="evidence" value="ECO:0007669"/>
    <property type="project" value="InterPro"/>
</dbReference>
<dbReference type="CDD" id="cd00125">
    <property type="entry name" value="PLA2c"/>
    <property type="match status" value="1"/>
</dbReference>
<dbReference type="FunFam" id="1.20.90.10:FF:000001">
    <property type="entry name" value="Basic phospholipase A2 homolog"/>
    <property type="match status" value="1"/>
</dbReference>
<dbReference type="Gene3D" id="1.20.90.10">
    <property type="entry name" value="Phospholipase A2 domain"/>
    <property type="match status" value="1"/>
</dbReference>
<dbReference type="InterPro" id="IPR001211">
    <property type="entry name" value="PLipase_A2"/>
</dbReference>
<dbReference type="InterPro" id="IPR033112">
    <property type="entry name" value="PLipase_A2_Asp_AS"/>
</dbReference>
<dbReference type="InterPro" id="IPR016090">
    <property type="entry name" value="PLipase_A2_dom"/>
</dbReference>
<dbReference type="InterPro" id="IPR036444">
    <property type="entry name" value="PLipase_A2_dom_sf"/>
</dbReference>
<dbReference type="InterPro" id="IPR033113">
    <property type="entry name" value="PLipase_A2_His_AS"/>
</dbReference>
<dbReference type="PANTHER" id="PTHR11716">
    <property type="entry name" value="PHOSPHOLIPASE A2 FAMILY MEMBER"/>
    <property type="match status" value="1"/>
</dbReference>
<dbReference type="PANTHER" id="PTHR11716:SF9">
    <property type="entry name" value="PHOSPHOLIPASE A2, MEMBRANE ASSOCIATED"/>
    <property type="match status" value="1"/>
</dbReference>
<dbReference type="Pfam" id="PF00068">
    <property type="entry name" value="Phospholip_A2_1"/>
    <property type="match status" value="1"/>
</dbReference>
<dbReference type="PRINTS" id="PR00389">
    <property type="entry name" value="PHPHLIPASEA2"/>
</dbReference>
<dbReference type="SMART" id="SM00085">
    <property type="entry name" value="PA2c"/>
    <property type="match status" value="1"/>
</dbReference>
<dbReference type="SUPFAM" id="SSF48619">
    <property type="entry name" value="Phospholipase A2, PLA2"/>
    <property type="match status" value="1"/>
</dbReference>
<dbReference type="PROSITE" id="PS00119">
    <property type="entry name" value="PA2_ASP"/>
    <property type="match status" value="1"/>
</dbReference>
<dbReference type="PROSITE" id="PS00118">
    <property type="entry name" value="PA2_HIS"/>
    <property type="match status" value="1"/>
</dbReference>
<name>PA2AC_TRIST</name>
<accession>Q6H3C9</accession>
<proteinExistence type="evidence at protein level"/>
<protein>
    <recommendedName>
        <fullName>Acidic phospholipase A2 Ts-A3</fullName>
        <shortName>svPLA2</shortName>
        <ecNumber>3.1.1.4</ecNumber>
    </recommendedName>
    <alternativeName>
        <fullName>Phosphatidylcholine 2-acylhydrolase</fullName>
    </alternativeName>
</protein>